<keyword id="KW-0961">Cell wall biogenesis/degradation</keyword>
<keyword id="KW-0378">Hydrolase</keyword>
<keyword id="KW-0479">Metal-binding</keyword>
<keyword id="KW-0482">Metalloprotease</keyword>
<keyword id="KW-0645">Protease</keyword>
<keyword id="KW-1185">Reference proteome</keyword>
<keyword id="KW-0732">Signal</keyword>
<keyword id="KW-0862">Zinc</keyword>
<protein>
    <recommendedName>
        <fullName evidence="1">Probable peptidoglycan L,D-endopeptidase MepK</fullName>
        <ecNumber evidence="1">3.4.-.-</ecNumber>
    </recommendedName>
    <alternativeName>
        <fullName evidence="1">Murein endopeptidase K</fullName>
    </alternativeName>
</protein>
<proteinExistence type="uncertain"/>
<sequence>MNYVDQNKRKWLSLGGIALGISILPNSVLAMVSTPKPRILTFRNINTGERLSGEFSLAKGFSPAMLKKLDYLMRDKRTNQVHKMDPNLFQKFYNIQTNLGLRNAEIEVICGYRSASTNAMRRRQSRGVAKNSYHIKGKAIDFRIAGVPLIKVKSSAESLRNGGVGYYPTSNFIHVDTGPVRTWKGV</sequence>
<gene>
    <name evidence="1" type="primary">mepK</name>
    <name evidence="6" type="ordered locus">HI_1665</name>
    <name evidence="5" type="ordered locus">HI_1666</name>
</gene>
<dbReference type="EC" id="3.4.-.-" evidence="1"/>
<dbReference type="EMBL" id="L42023">
    <property type="protein sequence ID" value="AAC23311.1"/>
    <property type="status" value="ALT_FRAME"/>
    <property type="molecule type" value="Genomic_DNA"/>
</dbReference>
<dbReference type="EMBL" id="L42023">
    <property type="protein sequence ID" value="AAC23313.1"/>
    <property type="status" value="ALT_FRAME"/>
    <property type="molecule type" value="Genomic_DNA"/>
</dbReference>
<dbReference type="PIR" id="F64039">
    <property type="entry name" value="F64039"/>
</dbReference>
<dbReference type="SMR" id="P44284"/>
<dbReference type="STRING" id="71421.HI_1666"/>
<dbReference type="DNASU" id="950486"/>
<dbReference type="EnsemblBacteria" id="AAC23311">
    <property type="protein sequence ID" value="AAC23311"/>
    <property type="gene ID" value="HI_1666"/>
</dbReference>
<dbReference type="KEGG" id="hin:HI_1666"/>
<dbReference type="eggNOG" id="COG3108">
    <property type="taxonomic scope" value="Bacteria"/>
</dbReference>
<dbReference type="HOGENOM" id="CLU_080400_1_2_6"/>
<dbReference type="PhylomeDB" id="P44284"/>
<dbReference type="UniPathway" id="UPA00963"/>
<dbReference type="Proteomes" id="UP000000579">
    <property type="component" value="Chromosome"/>
</dbReference>
<dbReference type="GO" id="GO:0016020">
    <property type="term" value="C:membrane"/>
    <property type="evidence" value="ECO:0007669"/>
    <property type="project" value="UniProtKB-SubCell"/>
</dbReference>
<dbReference type="Gene3D" id="3.30.1380.10">
    <property type="match status" value="1"/>
</dbReference>
<dbReference type="InterPro" id="IPR010275">
    <property type="entry name" value="DUF882"/>
</dbReference>
<dbReference type="InterPro" id="IPR009045">
    <property type="entry name" value="Hedgehog_sig/DD-Pept_Zn-bd_sf"/>
</dbReference>
<dbReference type="PANTHER" id="PTHR37425">
    <property type="match status" value="1"/>
</dbReference>
<dbReference type="PANTHER" id="PTHR37425:SF1">
    <property type="entry name" value="OUTER MEMBRANE PROTEIN"/>
    <property type="match status" value="1"/>
</dbReference>
<dbReference type="Pfam" id="PF05951">
    <property type="entry name" value="Peptidase_M15_2"/>
    <property type="match status" value="1"/>
</dbReference>
<dbReference type="SUPFAM" id="SSF55166">
    <property type="entry name" value="Hedgehog/DD-peptidase"/>
    <property type="match status" value="1"/>
</dbReference>
<name>MEPK_HAEIN</name>
<evidence type="ECO:0000250" key="1">
    <source>
        <dbReference type="UniProtKB" id="P0AB06"/>
    </source>
</evidence>
<evidence type="ECO:0000250" key="2">
    <source>
        <dbReference type="UniProtKB" id="Q06241"/>
    </source>
</evidence>
<evidence type="ECO:0000255" key="3"/>
<evidence type="ECO:0000305" key="4"/>
<evidence type="ECO:0000312" key="5">
    <source>
        <dbReference type="EMBL" id="AAC23311.1"/>
    </source>
</evidence>
<evidence type="ECO:0000312" key="6">
    <source>
        <dbReference type="EMBL" id="AAC23313.1"/>
    </source>
</evidence>
<organism>
    <name type="scientific">Haemophilus influenzae (strain ATCC 51907 / DSM 11121 / KW20 / Rd)</name>
    <dbReference type="NCBI Taxonomy" id="71421"/>
    <lineage>
        <taxon>Bacteria</taxon>
        <taxon>Pseudomonadati</taxon>
        <taxon>Pseudomonadota</taxon>
        <taxon>Gammaproteobacteria</taxon>
        <taxon>Pasteurellales</taxon>
        <taxon>Pasteurellaceae</taxon>
        <taxon>Haemophilus</taxon>
    </lineage>
</organism>
<accession>P44284</accession>
<accession>P44283</accession>
<comment type="function">
    <text evidence="1">L,D-endopeptidase that cleaves meso-diaminopimelic acid (mDAP)-mDAP cross-links in peptidoglycan. It works in conjunction with other elongation-specific D,D-endopeptidases to make space for efficient incorporation of nascent peptidoglycan strands into the sacculus and thus enable cell wall expansion.</text>
</comment>
<comment type="cofactor">
    <cofactor evidence="2">
        <name>Zn(2+)</name>
        <dbReference type="ChEBI" id="CHEBI:29105"/>
    </cofactor>
    <text evidence="2">Binds 1 zinc ion per subunit.</text>
</comment>
<comment type="pathway">
    <text evidence="1">Cell wall biogenesis; cell wall polysaccharide biosynthesis.</text>
</comment>
<comment type="similarity">
    <text evidence="4">Belongs to the peptidase M15 family.</text>
</comment>
<comment type="caution">
    <text evidence="4">Could be the product of a pseudogene. A frameshift in position 127 produces two separate ORFs.</text>
</comment>
<comment type="sequence caution" evidence="4">
    <conflict type="frameshift">
        <sequence resource="EMBL-CDS" id="AAC23311"/>
    </conflict>
</comment>
<comment type="sequence caution" evidence="4">
    <conflict type="frameshift">
        <sequence resource="EMBL-CDS" id="AAC23313"/>
    </conflict>
</comment>
<reference key="1">
    <citation type="journal article" date="1995" name="Science">
        <title>Whole-genome random sequencing and assembly of Haemophilus influenzae Rd.</title>
        <authorList>
            <person name="Fleischmann R.D."/>
            <person name="Adams M.D."/>
            <person name="White O."/>
            <person name="Clayton R.A."/>
            <person name="Kirkness E.F."/>
            <person name="Kerlavage A.R."/>
            <person name="Bult C.J."/>
            <person name="Tomb J.-F."/>
            <person name="Dougherty B.A."/>
            <person name="Merrick J.M."/>
            <person name="McKenney K."/>
            <person name="Sutton G.G."/>
            <person name="FitzHugh W."/>
            <person name="Fields C.A."/>
            <person name="Gocayne J.D."/>
            <person name="Scott J.D."/>
            <person name="Shirley R."/>
            <person name="Liu L.-I."/>
            <person name="Glodek A."/>
            <person name="Kelley J.M."/>
            <person name="Weidman J.F."/>
            <person name="Phillips C.A."/>
            <person name="Spriggs T."/>
            <person name="Hedblom E."/>
            <person name="Cotton M.D."/>
            <person name="Utterback T.R."/>
            <person name="Hanna M.C."/>
            <person name="Nguyen D.T."/>
            <person name="Saudek D.M."/>
            <person name="Brandon R.C."/>
            <person name="Fine L.D."/>
            <person name="Fritchman J.L."/>
            <person name="Fuhrmann J.L."/>
            <person name="Geoghagen N.S.M."/>
            <person name="Gnehm C.L."/>
            <person name="McDonald L.A."/>
            <person name="Small K.V."/>
            <person name="Fraser C.M."/>
            <person name="Smith H.O."/>
            <person name="Venter J.C."/>
        </authorList>
    </citation>
    <scope>NUCLEOTIDE SEQUENCE [LARGE SCALE GENOMIC DNA]</scope>
    <source>
        <strain>ATCC 51907 / DSM 11121 / KW20 / Rd</strain>
    </source>
</reference>
<feature type="signal peptide" evidence="3">
    <location>
        <begin position="1"/>
        <end position="30"/>
    </location>
</feature>
<feature type="chain" id="PRO_0000168777" description="Probable peptidoglycan L,D-endopeptidase MepK">
    <location>
        <begin position="31"/>
        <end position="186"/>
    </location>
</feature>
<feature type="binding site" evidence="2">
    <location>
        <position position="134"/>
    </location>
    <ligand>
        <name>Zn(2+)</name>
        <dbReference type="ChEBI" id="CHEBI:29105"/>
        <note>catalytic</note>
    </ligand>
</feature>
<feature type="binding site" evidence="2">
    <location>
        <position position="141"/>
    </location>
    <ligand>
        <name>Zn(2+)</name>
        <dbReference type="ChEBI" id="CHEBI:29105"/>
        <note>catalytic</note>
    </ligand>
</feature>
<feature type="binding site" evidence="2">
    <location>
        <position position="174"/>
    </location>
    <ligand>
        <name>Zn(2+)</name>
        <dbReference type="ChEBI" id="CHEBI:29105"/>
        <note>catalytic</note>
    </ligand>
</feature>